<comment type="function">
    <text evidence="1">Bidirectionally degrades single-stranded DNA into large acid-insoluble oligonucleotides, which are then degraded further into small acid-soluble oligonucleotides.</text>
</comment>
<comment type="catalytic activity">
    <reaction evidence="1">
        <text>Exonucleolytic cleavage in either 5'- to 3'- or 3'- to 5'-direction to yield nucleoside 5'-phosphates.</text>
        <dbReference type="EC" id="3.1.11.6"/>
    </reaction>
</comment>
<comment type="subunit">
    <text evidence="1">Heterooligomer composed of large and small subunits.</text>
</comment>
<comment type="subcellular location">
    <subcellularLocation>
        <location evidence="1">Cytoplasm</location>
    </subcellularLocation>
</comment>
<comment type="similarity">
    <text evidence="1">Belongs to the XseB family.</text>
</comment>
<accession>B2UMV0</accession>
<proteinExistence type="inferred from homology"/>
<organism>
    <name type="scientific">Akkermansia muciniphila (strain ATCC BAA-835 / DSM 22959 / JCM 33894 / BCRC 81048 / CCUG 64013 / CIP 107961 / Muc)</name>
    <dbReference type="NCBI Taxonomy" id="349741"/>
    <lineage>
        <taxon>Bacteria</taxon>
        <taxon>Pseudomonadati</taxon>
        <taxon>Verrucomicrobiota</taxon>
        <taxon>Verrucomicrobiia</taxon>
        <taxon>Verrucomicrobiales</taxon>
        <taxon>Akkermansiaceae</taxon>
        <taxon>Akkermansia</taxon>
    </lineage>
</organism>
<dbReference type="EC" id="3.1.11.6" evidence="1"/>
<dbReference type="EMBL" id="CP001071">
    <property type="protein sequence ID" value="ACD04156.1"/>
    <property type="molecule type" value="Genomic_DNA"/>
</dbReference>
<dbReference type="RefSeq" id="WP_012419371.1">
    <property type="nucleotide sequence ID" value="NZ_CP071807.1"/>
</dbReference>
<dbReference type="SMR" id="B2UMV0"/>
<dbReference type="STRING" id="349741.Amuc_0314"/>
<dbReference type="PaxDb" id="349741-Amuc_0314"/>
<dbReference type="GeneID" id="60879792"/>
<dbReference type="KEGG" id="amu:Amuc_0314"/>
<dbReference type="eggNOG" id="COG1722">
    <property type="taxonomic scope" value="Bacteria"/>
</dbReference>
<dbReference type="HOGENOM" id="CLU_145918_3_3_0"/>
<dbReference type="OrthoDB" id="9798666at2"/>
<dbReference type="BioCyc" id="AMUC349741:G1GBX-356-MONOMER"/>
<dbReference type="Proteomes" id="UP000001031">
    <property type="component" value="Chromosome"/>
</dbReference>
<dbReference type="GO" id="GO:0005829">
    <property type="term" value="C:cytosol"/>
    <property type="evidence" value="ECO:0007669"/>
    <property type="project" value="TreeGrafter"/>
</dbReference>
<dbReference type="GO" id="GO:0009318">
    <property type="term" value="C:exodeoxyribonuclease VII complex"/>
    <property type="evidence" value="ECO:0007669"/>
    <property type="project" value="InterPro"/>
</dbReference>
<dbReference type="GO" id="GO:0008855">
    <property type="term" value="F:exodeoxyribonuclease VII activity"/>
    <property type="evidence" value="ECO:0007669"/>
    <property type="project" value="UniProtKB-UniRule"/>
</dbReference>
<dbReference type="GO" id="GO:0006308">
    <property type="term" value="P:DNA catabolic process"/>
    <property type="evidence" value="ECO:0007669"/>
    <property type="project" value="UniProtKB-UniRule"/>
</dbReference>
<dbReference type="Gene3D" id="1.10.287.1040">
    <property type="entry name" value="Exonuclease VII, small subunit"/>
    <property type="match status" value="1"/>
</dbReference>
<dbReference type="HAMAP" id="MF_00337">
    <property type="entry name" value="Exonuc_7_S"/>
    <property type="match status" value="1"/>
</dbReference>
<dbReference type="InterPro" id="IPR003761">
    <property type="entry name" value="Exonuc_VII_S"/>
</dbReference>
<dbReference type="InterPro" id="IPR037004">
    <property type="entry name" value="Exonuc_VII_ssu_sf"/>
</dbReference>
<dbReference type="NCBIfam" id="TIGR01280">
    <property type="entry name" value="xseB"/>
    <property type="match status" value="1"/>
</dbReference>
<dbReference type="PANTHER" id="PTHR34137">
    <property type="entry name" value="EXODEOXYRIBONUCLEASE 7 SMALL SUBUNIT"/>
    <property type="match status" value="1"/>
</dbReference>
<dbReference type="PANTHER" id="PTHR34137:SF1">
    <property type="entry name" value="EXODEOXYRIBONUCLEASE 7 SMALL SUBUNIT"/>
    <property type="match status" value="1"/>
</dbReference>
<dbReference type="Pfam" id="PF02609">
    <property type="entry name" value="Exonuc_VII_S"/>
    <property type="match status" value="1"/>
</dbReference>
<dbReference type="PIRSF" id="PIRSF006488">
    <property type="entry name" value="Exonuc_VII_S"/>
    <property type="match status" value="1"/>
</dbReference>
<dbReference type="SUPFAM" id="SSF116842">
    <property type="entry name" value="XseB-like"/>
    <property type="match status" value="1"/>
</dbReference>
<keyword id="KW-0963">Cytoplasm</keyword>
<keyword id="KW-0269">Exonuclease</keyword>
<keyword id="KW-0378">Hydrolase</keyword>
<keyword id="KW-0540">Nuclease</keyword>
<keyword id="KW-1185">Reference proteome</keyword>
<sequence>MAKQRKNAPGFEESVARLEEIIRLTEAPVTELEDMIALVEEGNKLIRHCRSILHDAELRIQTLSNPETVQDKTDTDEPDSNEFSLT</sequence>
<gene>
    <name evidence="1" type="primary">xseB</name>
    <name type="ordered locus">Amuc_0314</name>
</gene>
<name>EX7S_AKKM8</name>
<evidence type="ECO:0000255" key="1">
    <source>
        <dbReference type="HAMAP-Rule" id="MF_00337"/>
    </source>
</evidence>
<evidence type="ECO:0000256" key="2">
    <source>
        <dbReference type="SAM" id="MobiDB-lite"/>
    </source>
</evidence>
<protein>
    <recommendedName>
        <fullName evidence="1">Exodeoxyribonuclease 7 small subunit</fullName>
        <ecNumber evidence="1">3.1.11.6</ecNumber>
    </recommendedName>
    <alternativeName>
        <fullName evidence="1">Exodeoxyribonuclease VII small subunit</fullName>
        <shortName evidence="1">Exonuclease VII small subunit</shortName>
    </alternativeName>
</protein>
<feature type="chain" id="PRO_1000119893" description="Exodeoxyribonuclease 7 small subunit">
    <location>
        <begin position="1"/>
        <end position="86"/>
    </location>
</feature>
<feature type="region of interest" description="Disordered" evidence="2">
    <location>
        <begin position="64"/>
        <end position="86"/>
    </location>
</feature>
<reference key="1">
    <citation type="journal article" date="2011" name="PLoS ONE">
        <title>The genome of Akkermansia muciniphila, a dedicated intestinal mucin degrader, and its use in exploring intestinal metagenomes.</title>
        <authorList>
            <person name="van Passel M.W."/>
            <person name="Kant R."/>
            <person name="Zoetendal E.G."/>
            <person name="Plugge C.M."/>
            <person name="Derrien M."/>
            <person name="Malfatti S.A."/>
            <person name="Chain P.S."/>
            <person name="Woyke T."/>
            <person name="Palva A."/>
            <person name="de Vos W.M."/>
            <person name="Smidt H."/>
        </authorList>
    </citation>
    <scope>NUCLEOTIDE SEQUENCE [LARGE SCALE GENOMIC DNA]</scope>
    <source>
        <strain>ATCC BAA-835 / DSM 22959 / JCM 33894 / BCRC 81048 / CCUG 64013 / CIP 107961 / Muc</strain>
    </source>
</reference>